<keyword id="KW-1003">Cell membrane</keyword>
<keyword id="KW-1015">Disulfide bond</keyword>
<keyword id="KW-0297">G-protein coupled receptor</keyword>
<keyword id="KW-0325">Glycoprotein</keyword>
<keyword id="KW-0472">Membrane</keyword>
<keyword id="KW-0552">Olfaction</keyword>
<keyword id="KW-0675">Receptor</keyword>
<keyword id="KW-1185">Reference proteome</keyword>
<keyword id="KW-0716">Sensory transduction</keyword>
<keyword id="KW-0807">Transducer</keyword>
<keyword id="KW-0812">Transmembrane</keyword>
<keyword id="KW-1133">Transmembrane helix</keyword>
<name>OR1A2_HUMAN</name>
<sequence>MKKENQSFNLDFILLGVTSQQEQNNVFFVIFLCIYPITLTGNLLIILAICADIRLHNPMYFLLANLSLVDIIFSSVTIPKVLANHLLGSKFISFGGCLMQMYFMIALAKADSYTLAAMAYDRAVAISCPLHYTTIMSPRSCILLIAGSWVIGNTSALPHTLLTASLSFCGNQEVANFYCDIMPLLKLSCSDVHFNVKMMYLGVGVFSLPLLCIIVSYVQVFSTVFQVPSTKSLFKAFCTCGSHLTVVFLYYGTTMGMYFRPLTSYSPKDAVITVMYVAVTPALNPFIYSLRNWDMKAALQKLFSKRISS</sequence>
<organism>
    <name type="scientific">Homo sapiens</name>
    <name type="common">Human</name>
    <dbReference type="NCBI Taxonomy" id="9606"/>
    <lineage>
        <taxon>Eukaryota</taxon>
        <taxon>Metazoa</taxon>
        <taxon>Chordata</taxon>
        <taxon>Craniata</taxon>
        <taxon>Vertebrata</taxon>
        <taxon>Euteleostomi</taxon>
        <taxon>Mammalia</taxon>
        <taxon>Eutheria</taxon>
        <taxon>Euarchontoglires</taxon>
        <taxon>Primates</taxon>
        <taxon>Haplorrhini</taxon>
        <taxon>Catarrhini</taxon>
        <taxon>Hominidae</taxon>
        <taxon>Homo</taxon>
    </lineage>
</organism>
<gene>
    <name type="primary">OR1A2</name>
</gene>
<feature type="chain" id="PRO_0000150415" description="Olfactory receptor 1A2">
    <location>
        <begin position="1"/>
        <end position="309"/>
    </location>
</feature>
<feature type="topological domain" description="Extracellular" evidence="1">
    <location>
        <begin position="1"/>
        <end position="25"/>
    </location>
</feature>
<feature type="transmembrane region" description="Helical; Name=1" evidence="1">
    <location>
        <begin position="26"/>
        <end position="49"/>
    </location>
</feature>
<feature type="topological domain" description="Cytoplasmic" evidence="1">
    <location>
        <begin position="50"/>
        <end position="57"/>
    </location>
</feature>
<feature type="transmembrane region" description="Helical; Name=2" evidence="1">
    <location>
        <begin position="58"/>
        <end position="79"/>
    </location>
</feature>
<feature type="topological domain" description="Extracellular" evidence="1">
    <location>
        <begin position="80"/>
        <end position="100"/>
    </location>
</feature>
<feature type="transmembrane region" description="Helical; Name=3" evidence="1">
    <location>
        <begin position="101"/>
        <end position="120"/>
    </location>
</feature>
<feature type="topological domain" description="Cytoplasmic" evidence="1">
    <location>
        <begin position="121"/>
        <end position="139"/>
    </location>
</feature>
<feature type="transmembrane region" description="Helical; Name=4" evidence="1">
    <location>
        <begin position="140"/>
        <end position="158"/>
    </location>
</feature>
<feature type="topological domain" description="Extracellular" evidence="1">
    <location>
        <begin position="159"/>
        <end position="195"/>
    </location>
</feature>
<feature type="transmembrane region" description="Helical; Name=5" evidence="1">
    <location>
        <begin position="196"/>
        <end position="218"/>
    </location>
</feature>
<feature type="topological domain" description="Cytoplasmic" evidence="1">
    <location>
        <begin position="219"/>
        <end position="235"/>
    </location>
</feature>
<feature type="transmembrane region" description="Helical; Name=6" evidence="1">
    <location>
        <begin position="236"/>
        <end position="258"/>
    </location>
</feature>
<feature type="topological domain" description="Extracellular" evidence="1">
    <location>
        <begin position="259"/>
        <end position="270"/>
    </location>
</feature>
<feature type="transmembrane region" description="Helical; Name=7" evidence="1">
    <location>
        <begin position="271"/>
        <end position="290"/>
    </location>
</feature>
<feature type="topological domain" description="Cytoplasmic" evidence="1">
    <location>
        <begin position="291"/>
        <end position="309"/>
    </location>
</feature>
<feature type="glycosylation site" description="N-linked (GlcNAc...) asparagine" evidence="1">
    <location>
        <position position="5"/>
    </location>
</feature>
<feature type="disulfide bond" evidence="2">
    <location>
        <begin position="97"/>
        <end position="189"/>
    </location>
</feature>
<feature type="sequence variant" id="VAR_062007" description="In dbSNP:rs56058341.">
    <original>L</original>
    <variation>F</variation>
    <location>
        <position position="244"/>
    </location>
</feature>
<feature type="sequence variant" id="VAR_022047" description="In dbSNP:rs2241091." evidence="3">
    <original>G</original>
    <variation>C</variation>
    <location>
        <position position="256"/>
    </location>
</feature>
<feature type="sequence variant" id="VAR_034162" description="In dbSNP:rs2469791." evidence="3">
    <original>R</original>
    <variation>C</variation>
    <location>
        <position position="260"/>
    </location>
</feature>
<feature type="sequence variant" id="VAR_034163" description="In dbSNP:rs12150427." evidence="3">
    <original>W</original>
    <variation>C</variation>
    <location>
        <position position="293"/>
    </location>
</feature>
<dbReference type="EMBL" id="AF155225">
    <property type="protein sequence ID" value="AAD39545.1"/>
    <property type="molecule type" value="Genomic_DNA"/>
</dbReference>
<dbReference type="EMBL" id="BC069092">
    <property type="protein sequence ID" value="AAH69092.1"/>
    <property type="molecule type" value="mRNA"/>
</dbReference>
<dbReference type="EMBL" id="BC106733">
    <property type="protein sequence ID" value="AAI06734.1"/>
    <property type="molecule type" value="mRNA"/>
</dbReference>
<dbReference type="EMBL" id="BC106734">
    <property type="protein sequence ID" value="AAI06735.1"/>
    <property type="molecule type" value="mRNA"/>
</dbReference>
<dbReference type="EMBL" id="AF399556">
    <property type="protein sequence ID" value="AAK95041.1"/>
    <property type="molecule type" value="Genomic_DNA"/>
</dbReference>
<dbReference type="EMBL" id="BK004242">
    <property type="protein sequence ID" value="DAA04640.1"/>
    <property type="molecule type" value="Genomic_DNA"/>
</dbReference>
<dbReference type="CCDS" id="CCDS11021.1"/>
<dbReference type="RefSeq" id="NP_036484.1">
    <property type="nucleotide sequence ID" value="NM_012352.3"/>
</dbReference>
<dbReference type="SMR" id="Q9Y585"/>
<dbReference type="BioGRID" id="117602">
    <property type="interactions" value="11"/>
</dbReference>
<dbReference type="FunCoup" id="Q9Y585">
    <property type="interactions" value="419"/>
</dbReference>
<dbReference type="IntAct" id="Q9Y585">
    <property type="interactions" value="3"/>
</dbReference>
<dbReference type="STRING" id="9606.ENSP00000371377"/>
<dbReference type="GlyCosmos" id="Q9Y585">
    <property type="glycosylation" value="1 site, No reported glycans"/>
</dbReference>
<dbReference type="GlyGen" id="Q9Y585">
    <property type="glycosylation" value="2 sites"/>
</dbReference>
<dbReference type="iPTMnet" id="Q9Y585"/>
<dbReference type="PhosphoSitePlus" id="Q9Y585"/>
<dbReference type="BioMuta" id="OR1A2"/>
<dbReference type="DMDM" id="9297027"/>
<dbReference type="MassIVE" id="Q9Y585"/>
<dbReference type="PaxDb" id="9606-ENSP00000371377"/>
<dbReference type="PeptideAtlas" id="Q9Y585"/>
<dbReference type="Antibodypedia" id="62121">
    <property type="antibodies" value="30 antibodies from 15 providers"/>
</dbReference>
<dbReference type="DNASU" id="26189"/>
<dbReference type="Ensembl" id="ENST00000381951.1">
    <property type="protein sequence ID" value="ENSP00000371377.1"/>
    <property type="gene ID" value="ENSG00000172150.4"/>
</dbReference>
<dbReference type="GeneID" id="26189"/>
<dbReference type="KEGG" id="hsa:26189"/>
<dbReference type="MANE-Select" id="ENST00000381951.1">
    <property type="protein sequence ID" value="ENSP00000371377.1"/>
    <property type="RefSeq nucleotide sequence ID" value="NM_012352.3"/>
    <property type="RefSeq protein sequence ID" value="NP_036484.1"/>
</dbReference>
<dbReference type="UCSC" id="uc002fvd.1">
    <property type="organism name" value="human"/>
</dbReference>
<dbReference type="AGR" id="HGNC:8180"/>
<dbReference type="CTD" id="26189"/>
<dbReference type="DisGeNET" id="26189"/>
<dbReference type="GeneCards" id="OR1A2"/>
<dbReference type="HGNC" id="HGNC:8180">
    <property type="gene designation" value="OR1A2"/>
</dbReference>
<dbReference type="HPA" id="ENSG00000172150">
    <property type="expression patterns" value="Not detected"/>
</dbReference>
<dbReference type="MIM" id="618047">
    <property type="type" value="gene"/>
</dbReference>
<dbReference type="neXtProt" id="NX_Q9Y585"/>
<dbReference type="OpenTargets" id="ENSG00000172150"/>
<dbReference type="PharmGKB" id="PA32052"/>
<dbReference type="VEuPathDB" id="HostDB:ENSG00000172150"/>
<dbReference type="eggNOG" id="ENOG502TF5D">
    <property type="taxonomic scope" value="Eukaryota"/>
</dbReference>
<dbReference type="GeneTree" id="ENSGT00900000141057"/>
<dbReference type="HOGENOM" id="CLU_012526_5_5_1"/>
<dbReference type="InParanoid" id="Q9Y585"/>
<dbReference type="OMA" id="GTTMGMY"/>
<dbReference type="OrthoDB" id="9444602at2759"/>
<dbReference type="PAN-GO" id="Q9Y585">
    <property type="GO annotations" value="3 GO annotations based on evolutionary models"/>
</dbReference>
<dbReference type="PhylomeDB" id="Q9Y585"/>
<dbReference type="TreeFam" id="TF337210"/>
<dbReference type="PathwayCommons" id="Q9Y585"/>
<dbReference type="Reactome" id="R-HSA-9752946">
    <property type="pathway name" value="Expression and translocation of olfactory receptors"/>
</dbReference>
<dbReference type="BioGRID-ORCS" id="26189">
    <property type="hits" value="3 hits in 741 CRISPR screens"/>
</dbReference>
<dbReference type="GeneWiki" id="OR1A2"/>
<dbReference type="GenomeRNAi" id="26189"/>
<dbReference type="Pharos" id="Q9Y585">
    <property type="development level" value="Tdark"/>
</dbReference>
<dbReference type="PRO" id="PR:Q9Y585"/>
<dbReference type="Proteomes" id="UP000005640">
    <property type="component" value="Chromosome 17"/>
</dbReference>
<dbReference type="RNAct" id="Q9Y585">
    <property type="molecule type" value="protein"/>
</dbReference>
<dbReference type="Bgee" id="ENSG00000172150">
    <property type="expression patterns" value="Expressed in male germ line stem cell (sensu Vertebrata) in testis"/>
</dbReference>
<dbReference type="ExpressionAtlas" id="Q9Y585">
    <property type="expression patterns" value="baseline and differential"/>
</dbReference>
<dbReference type="GO" id="GO:0005886">
    <property type="term" value="C:plasma membrane"/>
    <property type="evidence" value="ECO:0000318"/>
    <property type="project" value="GO_Central"/>
</dbReference>
<dbReference type="GO" id="GO:0004930">
    <property type="term" value="F:G protein-coupled receptor activity"/>
    <property type="evidence" value="ECO:0007669"/>
    <property type="project" value="UniProtKB-KW"/>
</dbReference>
<dbReference type="GO" id="GO:0004984">
    <property type="term" value="F:olfactory receptor activity"/>
    <property type="evidence" value="ECO:0000318"/>
    <property type="project" value="GO_Central"/>
</dbReference>
<dbReference type="GO" id="GO:0032467">
    <property type="term" value="P:positive regulation of cytokinesis"/>
    <property type="evidence" value="ECO:0000315"/>
    <property type="project" value="UniProtKB"/>
</dbReference>
<dbReference type="GO" id="GO:0007165">
    <property type="term" value="P:signal transduction"/>
    <property type="evidence" value="ECO:0000318"/>
    <property type="project" value="GO_Central"/>
</dbReference>
<dbReference type="FunFam" id="1.20.1070.10:FF:000082">
    <property type="entry name" value="Olfactory receptor 1A1"/>
    <property type="match status" value="1"/>
</dbReference>
<dbReference type="Gene3D" id="1.20.1070.10">
    <property type="entry name" value="Rhodopsin 7-helix transmembrane proteins"/>
    <property type="match status" value="1"/>
</dbReference>
<dbReference type="InterPro" id="IPR000276">
    <property type="entry name" value="GPCR_Rhodpsn"/>
</dbReference>
<dbReference type="InterPro" id="IPR017452">
    <property type="entry name" value="GPCR_Rhodpsn_7TM"/>
</dbReference>
<dbReference type="InterPro" id="IPR000725">
    <property type="entry name" value="Olfact_rcpt"/>
</dbReference>
<dbReference type="PANTHER" id="PTHR48001">
    <property type="entry name" value="OLFACTORY RECEPTOR"/>
    <property type="match status" value="1"/>
</dbReference>
<dbReference type="Pfam" id="PF13853">
    <property type="entry name" value="7tm_4"/>
    <property type="match status" value="1"/>
</dbReference>
<dbReference type="PRINTS" id="PR00237">
    <property type="entry name" value="GPCRRHODOPSN"/>
</dbReference>
<dbReference type="PRINTS" id="PR00245">
    <property type="entry name" value="OLFACTORYR"/>
</dbReference>
<dbReference type="SUPFAM" id="SSF81321">
    <property type="entry name" value="Family A G protein-coupled receptor-like"/>
    <property type="match status" value="1"/>
</dbReference>
<dbReference type="PROSITE" id="PS50262">
    <property type="entry name" value="G_PROTEIN_RECEP_F1_2"/>
    <property type="match status" value="1"/>
</dbReference>
<reference key="1">
    <citation type="journal article" date="2000" name="Genomics">
        <title>Sequence, structure, and evolution of a complete human olfactory receptor gene cluster.</title>
        <authorList>
            <person name="Glusman G."/>
            <person name="Sosinsky A."/>
            <person name="Ben-Asher E."/>
            <person name="Avidan N."/>
            <person name="Sonkin D."/>
            <person name="Bahar A."/>
            <person name="Rosenthal A."/>
            <person name="Clifton S."/>
            <person name="Roe B."/>
            <person name="Ferraz C."/>
            <person name="Demaille J.G."/>
            <person name="Lancet D."/>
        </authorList>
    </citation>
    <scope>NUCLEOTIDE SEQUENCE [GENOMIC DNA]</scope>
</reference>
<reference key="2">
    <citation type="journal article" date="2004" name="Genome Res.">
        <title>The status, quality, and expansion of the NIH full-length cDNA project: the Mammalian Gene Collection (MGC).</title>
        <authorList>
            <consortium name="The MGC Project Team"/>
        </authorList>
    </citation>
    <scope>NUCLEOTIDE SEQUENCE [LARGE SCALE MRNA]</scope>
    <scope>VARIANTS CYS-256; CYS-260 AND CYS-293</scope>
</reference>
<reference key="3">
    <citation type="journal article" date="2002" name="Genomics">
        <title>DEFOG: a practical scheme for deciphering families of genes.</title>
        <authorList>
            <person name="Fuchs T."/>
            <person name="Malecova B."/>
            <person name="Linhart C."/>
            <person name="Sharan R."/>
            <person name="Khen M."/>
            <person name="Herwig R."/>
            <person name="Shmulevich D."/>
            <person name="Elkon R."/>
            <person name="Steinfath M."/>
            <person name="O'Brien J.K."/>
            <person name="Radelof U."/>
            <person name="Lehrach H."/>
            <person name="Lancet D."/>
            <person name="Shamir R."/>
        </authorList>
    </citation>
    <scope>NUCLEOTIDE SEQUENCE [GENOMIC DNA] OF 68-282</scope>
</reference>
<reference key="4">
    <citation type="journal article" date="2004" name="Proc. Natl. Acad. Sci. U.S.A.">
        <title>The human olfactory receptor gene family.</title>
        <authorList>
            <person name="Malnic B."/>
            <person name="Godfrey P.A."/>
            <person name="Buck L.B."/>
        </authorList>
    </citation>
    <scope>IDENTIFICATION</scope>
</reference>
<reference key="5">
    <citation type="journal article" date="2004" name="Proc. Natl. Acad. Sci. U.S.A.">
        <authorList>
            <person name="Malnic B."/>
            <person name="Godfrey P.A."/>
            <person name="Buck L.B."/>
        </authorList>
    </citation>
    <scope>ERRATUM OF PUBMED:14983052</scope>
</reference>
<protein>
    <recommendedName>
        <fullName>Olfactory receptor 1A2</fullName>
    </recommendedName>
    <alternativeName>
        <fullName>Olfactory receptor 17-6</fullName>
        <shortName>OR17-6</shortName>
    </alternativeName>
    <alternativeName>
        <fullName>Olfactory receptor OR17-10</fullName>
    </alternativeName>
</protein>
<comment type="function">
    <text evidence="4">Odorant receptor.</text>
</comment>
<comment type="subcellular location">
    <subcellularLocation>
        <location>Cell membrane</location>
        <topology>Multi-pass membrane protein</topology>
    </subcellularLocation>
</comment>
<comment type="similarity">
    <text evidence="2">Belongs to the G-protein coupled receptor 1 family.</text>
</comment>
<comment type="online information" name="Human Olfactory Receptor Data Exploratorium (HORDE)">
    <link uri="http://genome.weizmann.ac.il/horde/card/index/symbol:OR1A2"/>
</comment>
<evidence type="ECO:0000255" key="1"/>
<evidence type="ECO:0000255" key="2">
    <source>
        <dbReference type="PROSITE-ProRule" id="PRU00521"/>
    </source>
</evidence>
<evidence type="ECO:0000269" key="3">
    <source>
    </source>
</evidence>
<evidence type="ECO:0000305" key="4"/>
<proteinExistence type="evidence at transcript level"/>
<accession>Q9Y585</accession>
<accession>Q3KPH3</accession>
<accession>Q6IFM0</accession>
<accession>Q6NTD8</accession>
<accession>Q96R86</accession>